<keyword id="KW-0143">Chaperone</keyword>
<keyword id="KW-0175">Coiled coil</keyword>
<keyword id="KW-0256">Endoplasmic reticulum</keyword>
<keyword id="KW-0472">Membrane</keyword>
<keyword id="KW-0597">Phosphoprotein</keyword>
<keyword id="KW-0653">Protein transport</keyword>
<keyword id="KW-1185">Reference proteome</keyword>
<keyword id="KW-0677">Repeat</keyword>
<keyword id="KW-0812">Transmembrane</keyword>
<keyword id="KW-1133">Transmembrane helix</keyword>
<keyword id="KW-0813">Transport</keyword>
<accession>Q8VHE0</accession>
<accession>E9QKG1</accession>
<accession>Q8VEB9</accession>
<comment type="function">
    <text evidence="2 6 7">Mediates cotranslational and post-translational transport of certain precursor polypeptides across endoplasmic reticulum (ER) (PubMed:22375059). Proposed to play an auxiliary role in recognition of precursors with short and apolar signal peptides. May cooperate with SEC62 and HSPA5/BiP to facilitate targeting of small presecretory proteins into the SEC61 channel-forming translocon complex, triggering channel opening for polypeptide translocation to the ER lumen (By similarity). Required for efficient PKD1/Polycystin-1 biogenesis and trafficking to the plasma membrane of the primary cilia (PubMed:21685914).</text>
</comment>
<comment type="subunit">
    <text evidence="1">The ER translocon complex consists of channel-forming core components SEC61A1, SEC61B and SEC61G and different auxiliary components such as SEC62 and SEC63.</text>
</comment>
<comment type="subcellular location">
    <subcellularLocation>
        <location>Endoplasmic reticulum membrane</location>
        <topology>Multi-pass membrane protein</topology>
    </subcellularLocation>
</comment>
<comment type="tissue specificity">
    <text evidence="6">Expressed in kidney (at protein level).</text>
</comment>
<comment type="disruption phenotype">
    <text evidence="6">Knockout mice exhibit very early embryonic lethality before E7.5. Conditional ubiquitous or kidney-specific knockdown results in polycystic liver and kidney phenotypes, respectively.</text>
</comment>
<dbReference type="EMBL" id="AY024346">
    <property type="protein sequence ID" value="AAK00580.1"/>
    <property type="molecule type" value="mRNA"/>
</dbReference>
<dbReference type="EMBL" id="AC124998">
    <property type="status" value="NOT_ANNOTATED_CDS"/>
    <property type="molecule type" value="Genomic_DNA"/>
</dbReference>
<dbReference type="EMBL" id="BC019366">
    <property type="protein sequence ID" value="AAH19366.1"/>
    <property type="molecule type" value="mRNA"/>
</dbReference>
<dbReference type="EMBL" id="BC031846">
    <property type="protein sequence ID" value="AAH31846.1"/>
    <property type="molecule type" value="mRNA"/>
</dbReference>
<dbReference type="CCDS" id="CCDS23815.1"/>
<dbReference type="RefSeq" id="NP_694695.3">
    <property type="nucleotide sequence ID" value="NM_153055.3"/>
</dbReference>
<dbReference type="BioGRID" id="228308">
    <property type="interactions" value="6"/>
</dbReference>
<dbReference type="FunCoup" id="Q8VHE0">
    <property type="interactions" value="3906"/>
</dbReference>
<dbReference type="STRING" id="10090.ENSMUSP00000019937"/>
<dbReference type="GlyGen" id="Q8VHE0">
    <property type="glycosylation" value="2 sites, 1 O-linked glycan (2 sites)"/>
</dbReference>
<dbReference type="iPTMnet" id="Q8VHE0"/>
<dbReference type="PhosphoSitePlus" id="Q8VHE0"/>
<dbReference type="SwissPalm" id="Q8VHE0"/>
<dbReference type="jPOST" id="Q8VHE0"/>
<dbReference type="PaxDb" id="10090-ENSMUSP00000019937"/>
<dbReference type="PeptideAtlas" id="Q8VHE0"/>
<dbReference type="ProteomicsDB" id="256611"/>
<dbReference type="Pumba" id="Q8VHE0"/>
<dbReference type="Antibodypedia" id="32190">
    <property type="antibodies" value="136 antibodies from 24 providers"/>
</dbReference>
<dbReference type="DNASU" id="140740"/>
<dbReference type="Ensembl" id="ENSMUST00000019937.5">
    <property type="protein sequence ID" value="ENSMUSP00000019937.5"/>
    <property type="gene ID" value="ENSMUSG00000019802.14"/>
</dbReference>
<dbReference type="GeneID" id="140740"/>
<dbReference type="KEGG" id="mmu:140740"/>
<dbReference type="UCSC" id="uc007eyx.2">
    <property type="organism name" value="mouse"/>
</dbReference>
<dbReference type="AGR" id="MGI:2155302"/>
<dbReference type="CTD" id="11231"/>
<dbReference type="MGI" id="MGI:2155302">
    <property type="gene designation" value="Sec63"/>
</dbReference>
<dbReference type="VEuPathDB" id="HostDB:ENSMUSG00000019802"/>
<dbReference type="eggNOG" id="KOG0721">
    <property type="taxonomic scope" value="Eukaryota"/>
</dbReference>
<dbReference type="GeneTree" id="ENSGT00390000001965"/>
<dbReference type="HOGENOM" id="CLU_014210_1_0_1"/>
<dbReference type="InParanoid" id="Q8VHE0"/>
<dbReference type="OMA" id="RAILHAH"/>
<dbReference type="OrthoDB" id="1734229at2759"/>
<dbReference type="PhylomeDB" id="Q8VHE0"/>
<dbReference type="TreeFam" id="TF105904"/>
<dbReference type="BioGRID-ORCS" id="140740">
    <property type="hits" value="22 hits in 80 CRISPR screens"/>
</dbReference>
<dbReference type="ChiTaRS" id="Sec63">
    <property type="organism name" value="mouse"/>
</dbReference>
<dbReference type="PRO" id="PR:Q8VHE0"/>
<dbReference type="Proteomes" id="UP000000589">
    <property type="component" value="Chromosome 10"/>
</dbReference>
<dbReference type="RNAct" id="Q8VHE0">
    <property type="molecule type" value="protein"/>
</dbReference>
<dbReference type="Bgee" id="ENSMUSG00000019802">
    <property type="expression patterns" value="Expressed in seminal vesicle and 255 other cell types or tissues"/>
</dbReference>
<dbReference type="GO" id="GO:0005789">
    <property type="term" value="C:endoplasmic reticulum membrane"/>
    <property type="evidence" value="ECO:0007669"/>
    <property type="project" value="UniProtKB-SubCell"/>
</dbReference>
<dbReference type="GO" id="GO:0016020">
    <property type="term" value="C:membrane"/>
    <property type="evidence" value="ECO:0000266"/>
    <property type="project" value="MGI"/>
</dbReference>
<dbReference type="GO" id="GO:0001889">
    <property type="term" value="P:liver development"/>
    <property type="evidence" value="ECO:0000315"/>
    <property type="project" value="MGI"/>
</dbReference>
<dbReference type="GO" id="GO:0071941">
    <property type="term" value="P:nitrogen cycle metabolic process"/>
    <property type="evidence" value="ECO:0000316"/>
    <property type="project" value="MGI"/>
</dbReference>
<dbReference type="GO" id="GO:0006620">
    <property type="term" value="P:post-translational protein targeting to endoplasmic reticulum membrane"/>
    <property type="evidence" value="ECO:0000315"/>
    <property type="project" value="MGI"/>
</dbReference>
<dbReference type="GO" id="GO:0031204">
    <property type="term" value="P:post-translational protein targeting to membrane, translocation"/>
    <property type="evidence" value="ECO:0000250"/>
    <property type="project" value="UniProtKB"/>
</dbReference>
<dbReference type="GO" id="GO:0006614">
    <property type="term" value="P:SRP-dependent cotranslational protein targeting to membrane"/>
    <property type="evidence" value="ECO:0000315"/>
    <property type="project" value="MGI"/>
</dbReference>
<dbReference type="CDD" id="cd06257">
    <property type="entry name" value="DnaJ"/>
    <property type="match status" value="1"/>
</dbReference>
<dbReference type="FunFam" id="1.10.3380.10:FF:000003">
    <property type="entry name" value="SEC63 homolog, protein translocation regulator"/>
    <property type="match status" value="1"/>
</dbReference>
<dbReference type="FunFam" id="1.10.287.110:FF:000032">
    <property type="entry name" value="Translocation protein SEC63 homolog"/>
    <property type="match status" value="1"/>
</dbReference>
<dbReference type="FunFam" id="1.10.150.20:FF:000022">
    <property type="entry name" value="translocation protein SEC63 homolog"/>
    <property type="match status" value="1"/>
</dbReference>
<dbReference type="FunFam" id="2.60.40.150:FF:000072">
    <property type="entry name" value="translocation protein SEC63 homolog"/>
    <property type="match status" value="1"/>
</dbReference>
<dbReference type="Gene3D" id="1.10.150.20">
    <property type="entry name" value="5' to 3' exonuclease, C-terminal subdomain"/>
    <property type="match status" value="1"/>
</dbReference>
<dbReference type="Gene3D" id="2.60.40.150">
    <property type="entry name" value="C2 domain"/>
    <property type="match status" value="1"/>
</dbReference>
<dbReference type="Gene3D" id="1.10.287.110">
    <property type="entry name" value="DnaJ domain"/>
    <property type="match status" value="1"/>
</dbReference>
<dbReference type="Gene3D" id="1.10.3380.10">
    <property type="entry name" value="Sec63 N-terminal domain-like domain"/>
    <property type="match status" value="1"/>
</dbReference>
<dbReference type="InterPro" id="IPR035892">
    <property type="entry name" value="C2_domain_sf"/>
</dbReference>
<dbReference type="InterPro" id="IPR001623">
    <property type="entry name" value="DnaJ_domain"/>
</dbReference>
<dbReference type="InterPro" id="IPR014756">
    <property type="entry name" value="Ig_E-set"/>
</dbReference>
<dbReference type="InterPro" id="IPR036869">
    <property type="entry name" value="J_dom_sf"/>
</dbReference>
<dbReference type="InterPro" id="IPR004179">
    <property type="entry name" value="Sec63-dom"/>
</dbReference>
<dbReference type="PANTHER" id="PTHR24075">
    <property type="entry name" value="SEC63 DOMAIN-CONTAINING"/>
    <property type="match status" value="1"/>
</dbReference>
<dbReference type="PANTHER" id="PTHR24075:SF0">
    <property type="entry name" value="TRANSLOCATION PROTEIN SEC63 HOMOLOG"/>
    <property type="match status" value="1"/>
</dbReference>
<dbReference type="Pfam" id="PF00226">
    <property type="entry name" value="DnaJ"/>
    <property type="match status" value="1"/>
</dbReference>
<dbReference type="Pfam" id="PF02889">
    <property type="entry name" value="Sec63"/>
    <property type="match status" value="2"/>
</dbReference>
<dbReference type="PRINTS" id="PR00625">
    <property type="entry name" value="JDOMAIN"/>
</dbReference>
<dbReference type="SMART" id="SM00271">
    <property type="entry name" value="DnaJ"/>
    <property type="match status" value="1"/>
</dbReference>
<dbReference type="SMART" id="SM00973">
    <property type="entry name" value="Sec63"/>
    <property type="match status" value="1"/>
</dbReference>
<dbReference type="SUPFAM" id="SSF46565">
    <property type="entry name" value="Chaperone J-domain"/>
    <property type="match status" value="1"/>
</dbReference>
<dbReference type="SUPFAM" id="SSF81296">
    <property type="entry name" value="E set domains"/>
    <property type="match status" value="1"/>
</dbReference>
<dbReference type="SUPFAM" id="SSF158702">
    <property type="entry name" value="Sec63 N-terminal domain-like"/>
    <property type="match status" value="1"/>
</dbReference>
<dbReference type="PROSITE" id="PS50076">
    <property type="entry name" value="DNAJ_2"/>
    <property type="match status" value="1"/>
</dbReference>
<reference key="1">
    <citation type="submission" date="2001-01" db="EMBL/GenBank/DDBJ databases">
        <title>Phenotypic characterization and positional mapping of the mouse deafness mutation jackson circler (jc).</title>
        <authorList>
            <person name="Mack M."/>
            <person name="Noben-Trauth K."/>
        </authorList>
    </citation>
    <scope>NUCLEOTIDE SEQUENCE [MRNA]</scope>
    <source>
        <strain>C57BL/6J</strain>
    </source>
</reference>
<reference key="2">
    <citation type="journal article" date="2009" name="PLoS Biol.">
        <title>Lineage-specific biology revealed by a finished genome assembly of the mouse.</title>
        <authorList>
            <person name="Church D.M."/>
            <person name="Goodstadt L."/>
            <person name="Hillier L.W."/>
            <person name="Zody M.C."/>
            <person name="Goldstein S."/>
            <person name="She X."/>
            <person name="Bult C.J."/>
            <person name="Agarwala R."/>
            <person name="Cherry J.L."/>
            <person name="DiCuccio M."/>
            <person name="Hlavina W."/>
            <person name="Kapustin Y."/>
            <person name="Meric P."/>
            <person name="Maglott D."/>
            <person name="Birtle Z."/>
            <person name="Marques A.C."/>
            <person name="Graves T."/>
            <person name="Zhou S."/>
            <person name="Teague B."/>
            <person name="Potamousis K."/>
            <person name="Churas C."/>
            <person name="Place M."/>
            <person name="Herschleb J."/>
            <person name="Runnheim R."/>
            <person name="Forrest D."/>
            <person name="Amos-Landgraf J."/>
            <person name="Schwartz D.C."/>
            <person name="Cheng Z."/>
            <person name="Lindblad-Toh K."/>
            <person name="Eichler E.E."/>
            <person name="Ponting C.P."/>
        </authorList>
    </citation>
    <scope>NUCLEOTIDE SEQUENCE [LARGE SCALE GENOMIC DNA]</scope>
    <source>
        <strain>C57BL/6J</strain>
    </source>
</reference>
<reference key="3">
    <citation type="journal article" date="2004" name="Genome Res.">
        <title>The status, quality, and expansion of the NIH full-length cDNA project: the Mammalian Gene Collection (MGC).</title>
        <authorList>
            <consortium name="The MGC Project Team"/>
        </authorList>
    </citation>
    <scope>NUCLEOTIDE SEQUENCE [LARGE SCALE MRNA]</scope>
</reference>
<reference key="4">
    <citation type="journal article" date="2010" name="Cell">
        <title>A tissue-specific atlas of mouse protein phosphorylation and expression.</title>
        <authorList>
            <person name="Huttlin E.L."/>
            <person name="Jedrychowski M.P."/>
            <person name="Elias J.E."/>
            <person name="Goswami T."/>
            <person name="Rad R."/>
            <person name="Beausoleil S.A."/>
            <person name="Villen J."/>
            <person name="Haas W."/>
            <person name="Sowa M.E."/>
            <person name="Gygi S.P."/>
        </authorList>
    </citation>
    <scope>IDENTIFICATION BY MASS SPECTROMETRY [LARGE SCALE ANALYSIS]</scope>
    <source>
        <tissue>Brain</tissue>
        <tissue>Brown adipose tissue</tissue>
        <tissue>Heart</tissue>
        <tissue>Kidney</tissue>
        <tissue>Liver</tissue>
        <tissue>Lung</tissue>
        <tissue>Pancreas</tissue>
        <tissue>Spleen</tissue>
        <tissue>Testis</tissue>
    </source>
</reference>
<reference key="5">
    <citation type="journal article" date="2011" name="Nat. Genet.">
        <title>A genetic interaction network of five genes for human polycystic kidney and liver diseases defines polycystin-1 as the central determinant of cyst formation.</title>
        <authorList>
            <person name="Fedeles S.V."/>
            <person name="Tian X."/>
            <person name="Gallagher A.R."/>
            <person name="Mitobe M."/>
            <person name="Nishio S."/>
            <person name="Lee S.H."/>
            <person name="Cai Y."/>
            <person name="Geng L."/>
            <person name="Crews C.M."/>
            <person name="Somlo S."/>
        </authorList>
    </citation>
    <scope>DISRUPTION PHENOTYPE</scope>
    <scope>TISSUE SPECIFICITY</scope>
    <scope>FUNCTION</scope>
</reference>
<reference key="6">
    <citation type="journal article" date="2012" name="J. Cell Sci.">
        <title>Different effects of Sec61alpha, Sec62 and Sec63 depletion on transport of polypeptides into the endoplasmic reticulum of mammalian cells.</title>
        <authorList>
            <person name="Lang S."/>
            <person name="Benedix J."/>
            <person name="Fedeles S.V."/>
            <person name="Schorr S."/>
            <person name="Schirra C."/>
            <person name="Schaeuble N."/>
            <person name="Jalal C."/>
            <person name="Greiner M."/>
            <person name="Hassdenteufel S."/>
            <person name="Tatzelt J."/>
            <person name="Kreutzer B."/>
            <person name="Edelmann L."/>
            <person name="Krause E."/>
            <person name="Rettig J."/>
            <person name="Somlo S."/>
            <person name="Zimmermann R."/>
            <person name="Dudek J."/>
        </authorList>
    </citation>
    <scope>FUNCTION</scope>
</reference>
<sequence>MAGQQFQYDDSGNTFFYFLTSFVGLIVIPATYYLWPRDQNAEQIRLKNIRKVYGRCMWYRLRLLKPQPNIIPTVKKIVLLAGWALFLFLAYKVSKTDREYQEYNPYEVLNLDPGATVAEIKKQYRLLSLKYHPDKGGDEVMFMRIAKAYAALTDEESRKNWEEFGNPDGPQATSFGIALPAWIVDQKNSILVLLVYGLAFMVILPVVVGSWWYRSIRYSGDQILIRTTQIYTYFVYKTRNMDMKRLIMVLAGASEFDPQYNKDSTSRPTDNILIPQLIREIGSINLKKNEPPLTCPYSLKARVLLLSHLARMKIPETLEEDQQFMLKKCPALLQEMVNVICQLIIMARSREEREFRAPTLASLENCMKLSQMAVQGLQQFKSPLLQLPHIEEDNLRRVSNHKKYKIKTIQDLVSLKESDRHSLLHFLEDEKYEEVMAVLGSFPYVTMDIKSQVLDDEDSNNITVGSLVTVLVKLTRQTMAEVFEKEQSICAAEEQPTEDGQSDANKIKAKGGWQQKNKGPKKMPKSKKKKPLKKKPTTVPLPQAKQQKQKQANGVVGSEAAIKEEEDDISDKGSDSEEEETNRDSQSEKEDGSDRESDREQDEKQSKDDEAEWQELQQSIQRKERALLETKSKITHPVYSLYFPEEKQEWWWLYIADRKEQTLISMPYHVCTLKDTEEVELKFPAPGKPGNYQYTVFLRSDSYMGLDQIKPLKLEVHEAKPVPENHPQWDTAIEGDEDQEDSEGFEDSFEEEEEEEEGGD</sequence>
<evidence type="ECO:0000250" key="1">
    <source>
        <dbReference type="UniProtKB" id="P82008"/>
    </source>
</evidence>
<evidence type="ECO:0000250" key="2">
    <source>
        <dbReference type="UniProtKB" id="Q9UGP8"/>
    </source>
</evidence>
<evidence type="ECO:0000255" key="3"/>
<evidence type="ECO:0000255" key="4">
    <source>
        <dbReference type="PROSITE-ProRule" id="PRU00286"/>
    </source>
</evidence>
<evidence type="ECO:0000256" key="5">
    <source>
        <dbReference type="SAM" id="MobiDB-lite"/>
    </source>
</evidence>
<evidence type="ECO:0000269" key="6">
    <source>
    </source>
</evidence>
<evidence type="ECO:0000269" key="7">
    <source>
    </source>
</evidence>
<evidence type="ECO:0000305" key="8"/>
<organism>
    <name type="scientific">Mus musculus</name>
    <name type="common">Mouse</name>
    <dbReference type="NCBI Taxonomy" id="10090"/>
    <lineage>
        <taxon>Eukaryota</taxon>
        <taxon>Metazoa</taxon>
        <taxon>Chordata</taxon>
        <taxon>Craniata</taxon>
        <taxon>Vertebrata</taxon>
        <taxon>Euteleostomi</taxon>
        <taxon>Mammalia</taxon>
        <taxon>Eutheria</taxon>
        <taxon>Euarchontoglires</taxon>
        <taxon>Glires</taxon>
        <taxon>Rodentia</taxon>
        <taxon>Myomorpha</taxon>
        <taxon>Muroidea</taxon>
        <taxon>Muridae</taxon>
        <taxon>Murinae</taxon>
        <taxon>Mus</taxon>
        <taxon>Mus</taxon>
    </lineage>
</organism>
<protein>
    <recommendedName>
        <fullName>Translocation protein SEC63 homolog</fullName>
    </recommendedName>
    <alternativeName>
        <fullName>DnaJ homolog subfamily C member 23</fullName>
    </alternativeName>
</protein>
<gene>
    <name type="primary">Sec63</name>
    <name type="synonym">Dnajc23</name>
    <name type="synonym">Sec63l</name>
</gene>
<name>SEC63_MOUSE</name>
<feature type="chain" id="PRO_0000071098" description="Translocation protein SEC63 homolog">
    <location>
        <begin position="1"/>
        <end position="760"/>
    </location>
</feature>
<feature type="topological domain" description="Lumenal" evidence="3">
    <location>
        <begin position="1"/>
        <end position="14"/>
    </location>
</feature>
<feature type="transmembrane region" description="Helical" evidence="3">
    <location>
        <begin position="15"/>
        <end position="35"/>
    </location>
</feature>
<feature type="topological domain" description="Cytoplasmic" evidence="3">
    <location>
        <begin position="36"/>
        <end position="69"/>
    </location>
</feature>
<feature type="transmembrane region" description="Helical" evidence="3">
    <location>
        <begin position="70"/>
        <end position="90"/>
    </location>
</feature>
<feature type="topological domain" description="Lumenal" evidence="3">
    <location>
        <begin position="91"/>
        <end position="188"/>
    </location>
</feature>
<feature type="transmembrane region" description="Helical" evidence="3">
    <location>
        <begin position="189"/>
        <end position="209"/>
    </location>
</feature>
<feature type="topological domain" description="Cytoplasmic" evidence="3">
    <location>
        <begin position="210"/>
        <end position="760"/>
    </location>
</feature>
<feature type="domain" description="J" evidence="4">
    <location>
        <begin position="104"/>
        <end position="165"/>
    </location>
</feature>
<feature type="domain" description="SEC63 1">
    <location>
        <begin position="367"/>
        <end position="457"/>
    </location>
</feature>
<feature type="domain" description="SEC63 2">
    <location>
        <begin position="637"/>
        <end position="714"/>
    </location>
</feature>
<feature type="region of interest" description="Disordered" evidence="5">
    <location>
        <begin position="492"/>
        <end position="617"/>
    </location>
</feature>
<feature type="region of interest" description="Disordered" evidence="5">
    <location>
        <begin position="720"/>
        <end position="760"/>
    </location>
</feature>
<feature type="coiled-coil region" evidence="3">
    <location>
        <begin position="603"/>
        <end position="635"/>
    </location>
</feature>
<feature type="compositionally biased region" description="Basic residues" evidence="5">
    <location>
        <begin position="518"/>
        <end position="536"/>
    </location>
</feature>
<feature type="compositionally biased region" description="Low complexity" evidence="5">
    <location>
        <begin position="543"/>
        <end position="552"/>
    </location>
</feature>
<feature type="compositionally biased region" description="Basic and acidic residues" evidence="5">
    <location>
        <begin position="582"/>
        <end position="608"/>
    </location>
</feature>
<feature type="compositionally biased region" description="Acidic residues" evidence="5">
    <location>
        <begin position="733"/>
        <end position="760"/>
    </location>
</feature>
<feature type="modified residue" description="Phosphothreonine" evidence="2">
    <location>
        <position position="537"/>
    </location>
</feature>
<feature type="modified residue" description="Phosphoserine" evidence="2">
    <location>
        <position position="742"/>
    </location>
</feature>
<feature type="modified residue" description="Phosphoserine" evidence="2">
    <location>
        <position position="748"/>
    </location>
</feature>
<feature type="sequence conflict" description="In Ref. 1; AAK00580." evidence="8" ref="1">
    <original>N</original>
    <variation>S</variation>
    <location>
        <position position="48"/>
    </location>
</feature>
<feature type="sequence conflict" description="In Ref. 3; AAH19366/AAH31846." evidence="8" ref="3">
    <original>R</original>
    <variation>K</variation>
    <location>
        <position position="267"/>
    </location>
</feature>
<proteinExistence type="evidence at protein level"/>